<name>IRC6_CANAW</name>
<sequence>MIPNHILILGSPNSGKLRIANLISKNEEIPNLEDVELHSGLIVKASLRTKYYFLKLNILIDEYSESKGATDEKKLSELHKWYQEFKSEEFGELREVLDGLMFTINMKTDSISFIRDALEIIEQIKISLGDEENLHDWGGFIAVVGSCPENQIVEDDLILEIEDMVLSQGLEFINLSTEGENEYKEKQGKDRIVELIESHDWTNLEMLKVDSKQYETNKLAKMESMKQKLINEKEELDLDDIFSKLNLARDHAQSLTQDERDKYANKVIEEIIDFL</sequence>
<gene>
    <name type="primary">IRC6</name>
    <name type="ORF">CAWG_03379</name>
</gene>
<accession>C4YH38</accession>
<comment type="function">
    <text evidence="1">Involved in gross chromosomal rearrangements (GCRs) and telomere healing.</text>
</comment>
<comment type="similarity">
    <text evidence="2">Belongs to the IRC6 family.</text>
</comment>
<dbReference type="EMBL" id="CH672349">
    <property type="protein sequence ID" value="EEQ45070.1"/>
    <property type="molecule type" value="Genomic_DNA"/>
</dbReference>
<dbReference type="SMR" id="C4YH38"/>
<dbReference type="PaxDb" id="5476-C4YH38"/>
<dbReference type="VEuPathDB" id="FungiDB:CAWG_03379"/>
<dbReference type="HOGENOM" id="CLU_064540_0_0_1"/>
<dbReference type="OMA" id="LMFTINM"/>
<dbReference type="OrthoDB" id="3562at766764"/>
<dbReference type="Proteomes" id="UP000001429">
    <property type="component" value="Chromosome 4, Supercontig 1.4"/>
</dbReference>
<dbReference type="GO" id="GO:0030674">
    <property type="term" value="F:protein-macromolecule adaptor activity"/>
    <property type="evidence" value="ECO:0007669"/>
    <property type="project" value="TreeGrafter"/>
</dbReference>
<dbReference type="GO" id="GO:0016192">
    <property type="term" value="P:vesicle-mediated transport"/>
    <property type="evidence" value="ECO:0007669"/>
    <property type="project" value="InterPro"/>
</dbReference>
<dbReference type="FunFam" id="3.40.50.11960:FF:000003">
    <property type="entry name" value="Increased recombination centers protein 6"/>
    <property type="match status" value="1"/>
</dbReference>
<dbReference type="Gene3D" id="3.40.50.11960">
    <property type="match status" value="1"/>
</dbReference>
<dbReference type="InterPro" id="IPR034627">
    <property type="entry name" value="Irc6"/>
</dbReference>
<dbReference type="PANTHER" id="PTHR28043">
    <property type="entry name" value="INCREASED RECOMBINATION CENTERS PROTEIN 6"/>
    <property type="match status" value="1"/>
</dbReference>
<dbReference type="PANTHER" id="PTHR28043:SF1">
    <property type="entry name" value="INCREASED RECOMBINATION CENTERS PROTEIN 6"/>
    <property type="match status" value="1"/>
</dbReference>
<dbReference type="Pfam" id="PF10199">
    <property type="entry name" value="Adaptin_binding"/>
    <property type="match status" value="1"/>
</dbReference>
<organism>
    <name type="scientific">Candida albicans (strain WO-1)</name>
    <name type="common">Yeast</name>
    <dbReference type="NCBI Taxonomy" id="294748"/>
    <lineage>
        <taxon>Eukaryota</taxon>
        <taxon>Fungi</taxon>
        <taxon>Dikarya</taxon>
        <taxon>Ascomycota</taxon>
        <taxon>Saccharomycotina</taxon>
        <taxon>Pichiomycetes</taxon>
        <taxon>Debaryomycetaceae</taxon>
        <taxon>Candida/Lodderomyces clade</taxon>
        <taxon>Candida</taxon>
    </lineage>
</organism>
<keyword id="KW-0160">Chromosomal rearrangement</keyword>
<feature type="chain" id="PRO_0000399217" description="Increased recombination centers protein 6">
    <location>
        <begin position="1"/>
        <end position="275"/>
    </location>
</feature>
<reference key="1">
    <citation type="journal article" date="2009" name="Nature">
        <title>Evolution of pathogenicity and sexual reproduction in eight Candida genomes.</title>
        <authorList>
            <person name="Butler G."/>
            <person name="Rasmussen M.D."/>
            <person name="Lin M.F."/>
            <person name="Santos M.A.S."/>
            <person name="Sakthikumar S."/>
            <person name="Munro C.A."/>
            <person name="Rheinbay E."/>
            <person name="Grabherr M."/>
            <person name="Forche A."/>
            <person name="Reedy J.L."/>
            <person name="Agrafioti I."/>
            <person name="Arnaud M.B."/>
            <person name="Bates S."/>
            <person name="Brown A.J.P."/>
            <person name="Brunke S."/>
            <person name="Costanzo M.C."/>
            <person name="Fitzpatrick D.A."/>
            <person name="de Groot P.W.J."/>
            <person name="Harris D."/>
            <person name="Hoyer L.L."/>
            <person name="Hube B."/>
            <person name="Klis F.M."/>
            <person name="Kodira C."/>
            <person name="Lennard N."/>
            <person name="Logue M.E."/>
            <person name="Martin R."/>
            <person name="Neiman A.M."/>
            <person name="Nikolaou E."/>
            <person name="Quail M.A."/>
            <person name="Quinn J."/>
            <person name="Santos M.C."/>
            <person name="Schmitzberger F.F."/>
            <person name="Sherlock G."/>
            <person name="Shah P."/>
            <person name="Silverstein K.A.T."/>
            <person name="Skrzypek M.S."/>
            <person name="Soll D."/>
            <person name="Staggs R."/>
            <person name="Stansfield I."/>
            <person name="Stumpf M.P.H."/>
            <person name="Sudbery P.E."/>
            <person name="Srikantha T."/>
            <person name="Zeng Q."/>
            <person name="Berman J."/>
            <person name="Berriman M."/>
            <person name="Heitman J."/>
            <person name="Gow N.A.R."/>
            <person name="Lorenz M.C."/>
            <person name="Birren B.W."/>
            <person name="Kellis M."/>
            <person name="Cuomo C.A."/>
        </authorList>
    </citation>
    <scope>NUCLEOTIDE SEQUENCE [LARGE SCALE GENOMIC DNA]</scope>
    <source>
        <strain>WO-1</strain>
    </source>
</reference>
<protein>
    <recommendedName>
        <fullName>Increased recombination centers protein 6</fullName>
    </recommendedName>
</protein>
<evidence type="ECO:0000250" key="1"/>
<evidence type="ECO:0000305" key="2"/>
<proteinExistence type="inferred from homology"/>